<protein>
    <recommendedName>
        <fullName evidence="2">Succinate--CoA ligase [ADP-forming] subunit beta, mitochondrial</fullName>
        <ecNumber evidence="2 5">6.2.1.5</ecNumber>
    </recommendedName>
    <alternativeName>
        <fullName evidence="2">ATP-specific succinyl-CoA synthetase subunit beta</fullName>
        <shortName evidence="2">A-SCS</shortName>
    </alternativeName>
    <alternativeName>
        <fullName evidence="2">Succinyl-CoA synthetase beta-A chain</fullName>
        <shortName evidence="2">SCS-betaA</shortName>
    </alternativeName>
</protein>
<keyword id="KW-0002">3D-structure</keyword>
<keyword id="KW-0007">Acetylation</keyword>
<keyword id="KW-0025">Alternative splicing</keyword>
<keyword id="KW-0067">ATP-binding</keyword>
<keyword id="KW-0225">Disease variant</keyword>
<keyword id="KW-0436">Ligase</keyword>
<keyword id="KW-0460">Magnesium</keyword>
<keyword id="KW-0479">Metal-binding</keyword>
<keyword id="KW-0496">Mitochondrion</keyword>
<keyword id="KW-0547">Nucleotide-binding</keyword>
<keyword id="KW-0597">Phosphoprotein</keyword>
<keyword id="KW-1274">Primary mitochondrial disease</keyword>
<keyword id="KW-1267">Proteomics identification</keyword>
<keyword id="KW-1185">Reference proteome</keyword>
<keyword id="KW-0809">Transit peptide</keyword>
<keyword id="KW-0816">Tricarboxylic acid cycle</keyword>
<proteinExistence type="evidence at protein level"/>
<sequence length="463" mass="50317">MAASMFYGRLVAVATLRNHRPRTAQRAAAQVLGSSGLFNNHGLQVQQQQQRNLSLHEYMSMELLQEAGVSVPKGYVAKSPDEAYAIAKKLGSKDVVIKAQVLAGGRGKGTFESGLKGGVKIVFSPEEAKAVSSQMIGKKLFTKQTGEKGRICNQVLVCERKYPRREYYFAITMERSFQGPVLIGSSHGGVNIEDVAAESPEAIIKEPIDIEEGIKKEQALQLAQKMGFPPNIVESAAENMVKLYSLFLKYDATMIEINPMVEDSDGAVLCMDAKINFDSNSAYRQKKIFDLQDWTQEDERDKDAAKANLNYIGLDGNIGCLVNGAGLAMATMDIIKLHGGTPANFLDVGGGATVHQVTEAFKLITSDKKVLAILVNIFGGIMRCDVIAQGIVMAVKDLEIKIPVVVRLQGTRVDDAKALIADSGLKILACDDLDEAARMVVKLSEIVTLAKQAHVDVKFQLPI</sequence>
<name>SUCB1_HUMAN</name>
<evidence type="ECO:0000250" key="1">
    <source>
        <dbReference type="UniProtKB" id="Q9Z2I9"/>
    </source>
</evidence>
<evidence type="ECO:0000255" key="2">
    <source>
        <dbReference type="HAMAP-Rule" id="MF_03220"/>
    </source>
</evidence>
<evidence type="ECO:0000269" key="3">
    <source>
    </source>
</evidence>
<evidence type="ECO:0000269" key="4">
    <source>
    </source>
</evidence>
<evidence type="ECO:0000269" key="5">
    <source>
    </source>
</evidence>
<evidence type="ECO:0000269" key="6">
    <source>
    </source>
</evidence>
<evidence type="ECO:0000269" key="7">
    <source>
    </source>
</evidence>
<evidence type="ECO:0000269" key="8">
    <source>
    </source>
</evidence>
<evidence type="ECO:0000269" key="9">
    <source>
    </source>
</evidence>
<evidence type="ECO:0000269" key="10">
    <source>
    </source>
</evidence>
<evidence type="ECO:0000269" key="11">
    <source>
    </source>
</evidence>
<evidence type="ECO:0000269" key="12">
    <source ref="4"/>
</evidence>
<evidence type="ECO:0000303" key="13">
    <source>
    </source>
</evidence>
<evidence type="ECO:0000303" key="14">
    <source>
    </source>
</evidence>
<evidence type="ECO:0000305" key="15"/>
<evidence type="ECO:0000305" key="16">
    <source>
    </source>
</evidence>
<evidence type="ECO:0007744" key="17">
    <source>
    </source>
</evidence>
<evidence type="ECO:0007744" key="18">
    <source>
    </source>
</evidence>
<evidence type="ECO:0007744" key="19">
    <source>
    </source>
</evidence>
<evidence type="ECO:0007829" key="20">
    <source>
        <dbReference type="PDB" id="6G4Q"/>
    </source>
</evidence>
<dbReference type="EC" id="6.2.1.5" evidence="2 5"/>
<dbReference type="EMBL" id="AB035863">
    <property type="protein sequence ID" value="BAA92873.1"/>
    <property type="molecule type" value="mRNA"/>
</dbReference>
<dbReference type="EMBL" id="AK001458">
    <property type="protein sequence ID" value="BAA91703.1"/>
    <property type="molecule type" value="mRNA"/>
</dbReference>
<dbReference type="EMBL" id="AK001847">
    <property type="protein sequence ID" value="BAA91939.1"/>
    <property type="molecule type" value="mRNA"/>
</dbReference>
<dbReference type="EMBL" id="AK315513">
    <property type="protein sequence ID" value="BAG37894.1"/>
    <property type="molecule type" value="mRNA"/>
</dbReference>
<dbReference type="EMBL" id="AL157369">
    <property type="status" value="NOT_ANNOTATED_CDS"/>
    <property type="molecule type" value="Genomic_DNA"/>
</dbReference>
<dbReference type="EMBL" id="CH471075">
    <property type="protein sequence ID" value="EAX08777.1"/>
    <property type="molecule type" value="Genomic_DNA"/>
</dbReference>
<dbReference type="EMBL" id="BC027587">
    <property type="protein sequence ID" value="AAH27587.1"/>
    <property type="molecule type" value="mRNA"/>
</dbReference>
<dbReference type="EMBL" id="AF058953">
    <property type="protein sequence ID" value="AAC64396.1"/>
    <property type="molecule type" value="mRNA"/>
</dbReference>
<dbReference type="CCDS" id="CCDS9406.1">
    <molecule id="Q9P2R7-1"/>
</dbReference>
<dbReference type="RefSeq" id="NP_003841.1">
    <molecule id="Q9P2R7-1"/>
    <property type="nucleotide sequence ID" value="NM_003850.3"/>
</dbReference>
<dbReference type="PDB" id="6G4Q">
    <property type="method" value="X-ray"/>
    <property type="resolution" value="2.59 A"/>
    <property type="chains" value="B=52-463"/>
</dbReference>
<dbReference type="PDBsum" id="6G4Q"/>
<dbReference type="SMR" id="Q9P2R7"/>
<dbReference type="BioGRID" id="114331">
    <property type="interactions" value="195"/>
</dbReference>
<dbReference type="ComplexPortal" id="CPX-6176">
    <property type="entry name" value="Mitochondrial succinyl-CoA synthetase complex, ATP-specific variant"/>
</dbReference>
<dbReference type="CORUM" id="Q9P2R7"/>
<dbReference type="FunCoup" id="Q9P2R7">
    <property type="interactions" value="1998"/>
</dbReference>
<dbReference type="IntAct" id="Q9P2R7">
    <property type="interactions" value="80"/>
</dbReference>
<dbReference type="MINT" id="Q9P2R7"/>
<dbReference type="STRING" id="9606.ENSP00000494360"/>
<dbReference type="ChEMBL" id="CHEMBL4105973"/>
<dbReference type="DrugBank" id="DB00787">
    <property type="generic name" value="Acyclovir"/>
</dbReference>
<dbReference type="GlyGen" id="Q9P2R7">
    <property type="glycosylation" value="1 site, 1 O-linked glycan (1 site)"/>
</dbReference>
<dbReference type="iPTMnet" id="Q9P2R7"/>
<dbReference type="PhosphoSitePlus" id="Q9P2R7"/>
<dbReference type="SwissPalm" id="Q9P2R7"/>
<dbReference type="BioMuta" id="SUCLA2"/>
<dbReference type="DMDM" id="94730427"/>
<dbReference type="jPOST" id="Q9P2R7"/>
<dbReference type="MassIVE" id="Q9P2R7"/>
<dbReference type="PaxDb" id="9606-ENSP00000367923"/>
<dbReference type="PeptideAtlas" id="Q9P2R7"/>
<dbReference type="ProteomicsDB" id="83885">
    <molecule id="Q9P2R7-1"/>
</dbReference>
<dbReference type="ProteomicsDB" id="83886">
    <molecule id="Q9P2R7-2"/>
</dbReference>
<dbReference type="Pumba" id="Q9P2R7"/>
<dbReference type="Antibodypedia" id="23774">
    <property type="antibodies" value="128 antibodies from 28 providers"/>
</dbReference>
<dbReference type="DNASU" id="8803"/>
<dbReference type="Ensembl" id="ENST00000643584.1">
    <molecule id="Q9P2R7-1"/>
    <property type="protein sequence ID" value="ENSP00000494987.1"/>
    <property type="gene ID" value="ENSG00000136143.16"/>
</dbReference>
<dbReference type="Ensembl" id="ENST00000646932.1">
    <molecule id="Q9P2R7-1"/>
    <property type="protein sequence ID" value="ENSP00000494360.1"/>
    <property type="gene ID" value="ENSG00000136143.16"/>
</dbReference>
<dbReference type="GeneID" id="8803"/>
<dbReference type="KEGG" id="hsa:8803"/>
<dbReference type="MANE-Select" id="ENST00000646932.1">
    <property type="protein sequence ID" value="ENSP00000494360.1"/>
    <property type="RefSeq nucleotide sequence ID" value="NM_003850.3"/>
    <property type="RefSeq protein sequence ID" value="NP_003841.1"/>
</dbReference>
<dbReference type="UCSC" id="uc001vbs.3">
    <molecule id="Q9P2R7-1"/>
    <property type="organism name" value="human"/>
</dbReference>
<dbReference type="AGR" id="HGNC:11448"/>
<dbReference type="CTD" id="8803"/>
<dbReference type="DisGeNET" id="8803"/>
<dbReference type="GeneCards" id="SUCLA2"/>
<dbReference type="GeneReviews" id="SUCLA2"/>
<dbReference type="HGNC" id="HGNC:11448">
    <property type="gene designation" value="SUCLA2"/>
</dbReference>
<dbReference type="HPA" id="ENSG00000136143">
    <property type="expression patterns" value="Tissue enhanced (skeletal muscle, tongue)"/>
</dbReference>
<dbReference type="MalaCards" id="SUCLA2"/>
<dbReference type="MIM" id="603921">
    <property type="type" value="gene"/>
</dbReference>
<dbReference type="MIM" id="612073">
    <property type="type" value="phenotype"/>
</dbReference>
<dbReference type="neXtProt" id="NX_Q9P2R7"/>
<dbReference type="OpenTargets" id="ENSG00000136143"/>
<dbReference type="Orphanet" id="1933">
    <property type="disease" value="Mitochondrial DNA depletion syndrome, encephalomyopathic form with methylmalonic aciduria"/>
</dbReference>
<dbReference type="PharmGKB" id="PA36245"/>
<dbReference type="VEuPathDB" id="HostDB:ENSG00000136143"/>
<dbReference type="eggNOG" id="KOG2799">
    <property type="taxonomic scope" value="Eukaryota"/>
</dbReference>
<dbReference type="GeneTree" id="ENSGT00390000010170"/>
<dbReference type="HOGENOM" id="CLU_037430_0_0_1"/>
<dbReference type="InParanoid" id="Q9P2R7"/>
<dbReference type="OrthoDB" id="1552at2759"/>
<dbReference type="PAN-GO" id="Q9P2R7">
    <property type="GO annotations" value="5 GO annotations based on evolutionary models"/>
</dbReference>
<dbReference type="PhylomeDB" id="Q9P2R7"/>
<dbReference type="TreeFam" id="TF300624"/>
<dbReference type="BioCyc" id="MetaCyc:ENSG00000136143-MONOMER"/>
<dbReference type="BRENDA" id="6.2.1.5">
    <property type="organism ID" value="2681"/>
</dbReference>
<dbReference type="PathwayCommons" id="Q9P2R7"/>
<dbReference type="Reactome" id="R-HSA-71403">
    <property type="pathway name" value="Citric acid cycle (TCA cycle)"/>
</dbReference>
<dbReference type="SignaLink" id="Q9P2R7"/>
<dbReference type="SIGNOR" id="Q9P2R7"/>
<dbReference type="UniPathway" id="UPA00223">
    <property type="reaction ID" value="UER00999"/>
</dbReference>
<dbReference type="BioGRID-ORCS" id="8803">
    <property type="hits" value="149 hits in 1154 CRISPR screens"/>
</dbReference>
<dbReference type="CD-CODE" id="91857CE7">
    <property type="entry name" value="Nucleolus"/>
</dbReference>
<dbReference type="CD-CODE" id="FB4E32DD">
    <property type="entry name" value="Presynaptic clusters and postsynaptic densities"/>
</dbReference>
<dbReference type="ChiTaRS" id="SUCLA2">
    <property type="organism name" value="human"/>
</dbReference>
<dbReference type="GeneWiki" id="SUCLA2"/>
<dbReference type="GenomeRNAi" id="8803"/>
<dbReference type="Pharos" id="Q9P2R7">
    <property type="development level" value="Tchem"/>
</dbReference>
<dbReference type="PRO" id="PR:Q9P2R7"/>
<dbReference type="Proteomes" id="UP000005640">
    <property type="component" value="Chromosome 13"/>
</dbReference>
<dbReference type="RNAct" id="Q9P2R7">
    <property type="molecule type" value="protein"/>
</dbReference>
<dbReference type="Bgee" id="ENSG00000136143">
    <property type="expression patterns" value="Expressed in jejunal mucosa and 212 other cell types or tissues"/>
</dbReference>
<dbReference type="ExpressionAtlas" id="Q9P2R7">
    <property type="expression patterns" value="baseline and differential"/>
</dbReference>
<dbReference type="GO" id="GO:0070062">
    <property type="term" value="C:extracellular exosome"/>
    <property type="evidence" value="ECO:0007005"/>
    <property type="project" value="UniProtKB"/>
</dbReference>
<dbReference type="GO" id="GO:0005759">
    <property type="term" value="C:mitochondrial matrix"/>
    <property type="evidence" value="ECO:0000304"/>
    <property type="project" value="Reactome"/>
</dbReference>
<dbReference type="GO" id="GO:0005739">
    <property type="term" value="C:mitochondrion"/>
    <property type="evidence" value="ECO:0000314"/>
    <property type="project" value="HPA"/>
</dbReference>
<dbReference type="GO" id="GO:0042709">
    <property type="term" value="C:succinate-CoA ligase complex"/>
    <property type="evidence" value="ECO:0000318"/>
    <property type="project" value="GO_Central"/>
</dbReference>
<dbReference type="GO" id="GO:0009361">
    <property type="term" value="C:succinate-CoA ligase complex (ADP-forming)"/>
    <property type="evidence" value="ECO:0000303"/>
    <property type="project" value="ComplexPortal"/>
</dbReference>
<dbReference type="GO" id="GO:0005524">
    <property type="term" value="F:ATP binding"/>
    <property type="evidence" value="ECO:0007669"/>
    <property type="project" value="UniProtKB-UniRule"/>
</dbReference>
<dbReference type="GO" id="GO:0000287">
    <property type="term" value="F:magnesium ion binding"/>
    <property type="evidence" value="ECO:0007669"/>
    <property type="project" value="UniProtKB-UniRule"/>
</dbReference>
<dbReference type="GO" id="GO:0004775">
    <property type="term" value="F:succinate-CoA ligase (ADP-forming) activity"/>
    <property type="evidence" value="ECO:0000318"/>
    <property type="project" value="GO_Central"/>
</dbReference>
<dbReference type="GO" id="GO:0006105">
    <property type="term" value="P:succinate metabolic process"/>
    <property type="evidence" value="ECO:0007669"/>
    <property type="project" value="Ensembl"/>
</dbReference>
<dbReference type="GO" id="GO:1901289">
    <property type="term" value="P:succinyl-CoA catabolic process"/>
    <property type="evidence" value="ECO:0000303"/>
    <property type="project" value="ComplexPortal"/>
</dbReference>
<dbReference type="GO" id="GO:0006104">
    <property type="term" value="P:succinyl-CoA metabolic process"/>
    <property type="evidence" value="ECO:0000318"/>
    <property type="project" value="GO_Central"/>
</dbReference>
<dbReference type="GO" id="GO:0006781">
    <property type="term" value="P:succinyl-CoA pathway"/>
    <property type="evidence" value="ECO:0000303"/>
    <property type="project" value="UniProtKB"/>
</dbReference>
<dbReference type="GO" id="GO:0006099">
    <property type="term" value="P:tricarboxylic acid cycle"/>
    <property type="evidence" value="ECO:0000318"/>
    <property type="project" value="GO_Central"/>
</dbReference>
<dbReference type="FunFam" id="3.30.470.20:FF:000002">
    <property type="entry name" value="Succinate--CoA ligase [ADP-forming] subunit beta"/>
    <property type="match status" value="1"/>
</dbReference>
<dbReference type="FunFam" id="3.40.50.261:FF:000001">
    <property type="entry name" value="Succinate--CoA ligase [ADP-forming] subunit beta"/>
    <property type="match status" value="1"/>
</dbReference>
<dbReference type="FunFam" id="3.30.1490.20:FF:000040">
    <property type="entry name" value="Succinate--CoA ligase [ADP-forming] subunit beta mitochondrial"/>
    <property type="match status" value="1"/>
</dbReference>
<dbReference type="Gene3D" id="3.30.1490.20">
    <property type="entry name" value="ATP-grasp fold, A domain"/>
    <property type="match status" value="1"/>
</dbReference>
<dbReference type="Gene3D" id="3.30.470.20">
    <property type="entry name" value="ATP-grasp fold, B domain"/>
    <property type="match status" value="1"/>
</dbReference>
<dbReference type="Gene3D" id="3.40.50.261">
    <property type="entry name" value="Succinyl-CoA synthetase domains"/>
    <property type="match status" value="1"/>
</dbReference>
<dbReference type="HAMAP" id="MF_00558">
    <property type="entry name" value="Succ_CoA_beta"/>
    <property type="match status" value="1"/>
</dbReference>
<dbReference type="HAMAP" id="MF_03220">
    <property type="entry name" value="Succ_CoA_betaA_euk"/>
    <property type="match status" value="1"/>
</dbReference>
<dbReference type="InterPro" id="IPR011761">
    <property type="entry name" value="ATP-grasp"/>
</dbReference>
<dbReference type="InterPro" id="IPR013650">
    <property type="entry name" value="ATP-grasp_succ-CoA_synth-type"/>
</dbReference>
<dbReference type="InterPro" id="IPR013815">
    <property type="entry name" value="ATP_grasp_subdomain_1"/>
</dbReference>
<dbReference type="InterPro" id="IPR017866">
    <property type="entry name" value="Succ-CoA_synthase_bsu_CS"/>
</dbReference>
<dbReference type="InterPro" id="IPR005811">
    <property type="entry name" value="SUCC_ACL_C"/>
</dbReference>
<dbReference type="InterPro" id="IPR034723">
    <property type="entry name" value="Succ_CoA_betaA_euk"/>
</dbReference>
<dbReference type="InterPro" id="IPR005809">
    <property type="entry name" value="Succ_CoA_ligase-like_bsu"/>
</dbReference>
<dbReference type="InterPro" id="IPR016102">
    <property type="entry name" value="Succinyl-CoA_synth-like"/>
</dbReference>
<dbReference type="NCBIfam" id="NF001913">
    <property type="entry name" value="PRK00696.1"/>
    <property type="match status" value="1"/>
</dbReference>
<dbReference type="NCBIfam" id="TIGR01016">
    <property type="entry name" value="sucCoAbeta"/>
    <property type="match status" value="1"/>
</dbReference>
<dbReference type="PANTHER" id="PTHR11815:SF14">
    <property type="entry name" value="SUCCINATE--COA LIGASE [ADP-FORMING] SUBUNIT BETA, MITOCHONDRIAL"/>
    <property type="match status" value="1"/>
</dbReference>
<dbReference type="PANTHER" id="PTHR11815">
    <property type="entry name" value="SUCCINYL-COA SYNTHETASE BETA CHAIN"/>
    <property type="match status" value="1"/>
</dbReference>
<dbReference type="Pfam" id="PF08442">
    <property type="entry name" value="ATP-grasp_2"/>
    <property type="match status" value="1"/>
</dbReference>
<dbReference type="Pfam" id="PF00549">
    <property type="entry name" value="Ligase_CoA"/>
    <property type="match status" value="1"/>
</dbReference>
<dbReference type="PIRSF" id="PIRSF001554">
    <property type="entry name" value="SucCS_beta"/>
    <property type="match status" value="1"/>
</dbReference>
<dbReference type="SUPFAM" id="SSF56059">
    <property type="entry name" value="Glutathione synthetase ATP-binding domain-like"/>
    <property type="match status" value="1"/>
</dbReference>
<dbReference type="SUPFAM" id="SSF52210">
    <property type="entry name" value="Succinyl-CoA synthetase domains"/>
    <property type="match status" value="1"/>
</dbReference>
<dbReference type="PROSITE" id="PS50975">
    <property type="entry name" value="ATP_GRASP"/>
    <property type="match status" value="1"/>
</dbReference>
<dbReference type="PROSITE" id="PS01217">
    <property type="entry name" value="SUCCINYL_COA_LIG_3"/>
    <property type="match status" value="1"/>
</dbReference>
<accession>Q9P2R7</accession>
<accession>B2RDE7</accession>
<accession>O95194</accession>
<accession>Q5T9Q4</accession>
<accession>Q5T9Q6</accession>
<accession>Q9NV21</accession>
<accession>Q9NVP7</accession>
<organism>
    <name type="scientific">Homo sapiens</name>
    <name type="common">Human</name>
    <dbReference type="NCBI Taxonomy" id="9606"/>
    <lineage>
        <taxon>Eukaryota</taxon>
        <taxon>Metazoa</taxon>
        <taxon>Chordata</taxon>
        <taxon>Craniata</taxon>
        <taxon>Vertebrata</taxon>
        <taxon>Euteleostomi</taxon>
        <taxon>Mammalia</taxon>
        <taxon>Eutheria</taxon>
        <taxon>Euarchontoglires</taxon>
        <taxon>Primates</taxon>
        <taxon>Haplorrhini</taxon>
        <taxon>Catarrhini</taxon>
        <taxon>Hominidae</taxon>
        <taxon>Homo</taxon>
    </lineage>
</organism>
<gene>
    <name evidence="2 14" type="primary">SUCLA2</name>
</gene>
<comment type="function">
    <text evidence="2 5 10">ATP-specific succinyl-CoA synthetase functions in the citric acid cycle (TCA), coupling the hydrolysis of succinyl-CoA to the synthesis of ATP and thus represents the only step of substrate-level phosphorylation in the TCA (PubMed:15877282, PubMed:34492704). The beta subunit provides nucleotide specificity of the enzyme and binds the substrate succinate, while the binding sites for coenzyme A and phosphate are found in the alpha subunit (By similarity).</text>
</comment>
<comment type="catalytic activity">
    <reaction evidence="2 5 10">
        <text>succinate + ATP + CoA = succinyl-CoA + ADP + phosphate</text>
        <dbReference type="Rhea" id="RHEA:17661"/>
        <dbReference type="ChEBI" id="CHEBI:30031"/>
        <dbReference type="ChEBI" id="CHEBI:30616"/>
        <dbReference type="ChEBI" id="CHEBI:43474"/>
        <dbReference type="ChEBI" id="CHEBI:57287"/>
        <dbReference type="ChEBI" id="CHEBI:57292"/>
        <dbReference type="ChEBI" id="CHEBI:456216"/>
        <dbReference type="EC" id="6.2.1.5"/>
    </reaction>
</comment>
<comment type="cofactor">
    <cofactor evidence="2">
        <name>Mg(2+)</name>
        <dbReference type="ChEBI" id="CHEBI:18420"/>
    </cofactor>
    <text evidence="2">Binds 1 Mg(2+) ion per subunit.</text>
</comment>
<comment type="activity regulation">
    <text evidence="10">Inhibited by itaconate.</text>
</comment>
<comment type="pathway">
    <text evidence="2 16">Carbohydrate metabolism; tricarboxylic acid cycle; succinate from succinyl-CoA (ligase route): step 1/1.</text>
</comment>
<comment type="subunit">
    <text evidence="2 3">Heterodimer of an alpha and a beta subunit. The beta subunit determines specificity for ATP (By similarity). Interacts with ALAS2 (PubMed:14643893).</text>
</comment>
<comment type="interaction">
    <interactant intactId="EBI-2269898">
        <id>Q9P2R7</id>
    </interactant>
    <interactant intactId="EBI-11522760">
        <id>Q6RW13-2</id>
        <label>AGTRAP</label>
    </interactant>
    <organismsDiffer>false</organismsDiffer>
    <experiments>6</experiments>
</comment>
<comment type="interaction">
    <interactant intactId="EBI-2269898">
        <id>Q9P2R7</id>
    </interactant>
    <interactant intactId="EBI-714543">
        <id>Q15041</id>
        <label>ARL6IP1</label>
    </interactant>
    <organismsDiffer>false</organismsDiffer>
    <experiments>6</experiments>
</comment>
<comment type="interaction">
    <interactant intactId="EBI-2269898">
        <id>Q9P2R7</id>
    </interactant>
    <interactant intactId="EBI-11522780">
        <id>Q96DZ9-2</id>
        <label>CMTM5</label>
    </interactant>
    <organismsDiffer>false</organismsDiffer>
    <experiments>6</experiments>
</comment>
<comment type="interaction">
    <interactant intactId="EBI-2269898">
        <id>Q9P2R7</id>
    </interactant>
    <interactant intactId="EBI-3918971">
        <id>Q9Y680</id>
        <label>FKBP7</label>
    </interactant>
    <organismsDiffer>false</organismsDiffer>
    <experiments>3</experiments>
</comment>
<comment type="interaction">
    <interactant intactId="EBI-2269898">
        <id>Q9P2R7</id>
    </interactant>
    <interactant intactId="EBI-739552">
        <id>P43364</id>
        <label>MAGEA11</label>
    </interactant>
    <organismsDiffer>false</organismsDiffer>
    <experiments>3</experiments>
</comment>
<comment type="interaction">
    <interactant intactId="EBI-2269898">
        <id>Q9P2R7</id>
    </interactant>
    <interactant intactId="EBI-944295">
        <id>Q969L2</id>
        <label>MAL2</label>
    </interactant>
    <organismsDiffer>false</organismsDiffer>
    <experiments>3</experiments>
</comment>
<comment type="interaction">
    <interactant intactId="EBI-2269898">
        <id>Q9P2R7</id>
    </interactant>
    <interactant intactId="EBI-748974">
        <id>Q96CV9</id>
        <label>OPTN</label>
    </interactant>
    <organismsDiffer>false</organismsDiffer>
    <experiments>3</experiments>
</comment>
<comment type="interaction">
    <interactant intactId="EBI-2269898">
        <id>Q9P2R7</id>
    </interactant>
    <interactant intactId="EBI-81088">
        <id>Q15436</id>
        <label>SEC23A</label>
    </interactant>
    <organismsDiffer>false</organismsDiffer>
    <experiments>3</experiments>
</comment>
<comment type="interaction">
    <interactant intactId="EBI-2269898">
        <id>Q9P2R7</id>
    </interactant>
    <interactant intactId="EBI-1044859">
        <id>Q9UBN6</id>
        <label>TNFRSF10D</label>
    </interactant>
    <organismsDiffer>false</organismsDiffer>
    <experiments>3</experiments>
</comment>
<comment type="subcellular location">
    <subcellularLocation>
        <location evidence="2 5 6 9">Mitochondrion</location>
    </subcellularLocation>
</comment>
<comment type="alternative products">
    <event type="alternative splicing"/>
    <isoform>
        <id>Q9P2R7-1</id>
        <name>1</name>
        <sequence type="displayed"/>
    </isoform>
    <isoform>
        <id>Q9P2R7-2</id>
        <name>2</name>
        <sequence type="described" ref="VSP_006292"/>
    </isoform>
</comment>
<comment type="tissue specificity">
    <text evidence="11">Widely expressed. Not expressed in liver and lung.</text>
</comment>
<comment type="disease" evidence="5 6 7 8">
    <disease id="DI-01523">
        <name>Mitochondrial DNA depletion syndrome 5</name>
        <acronym>MTDPS5</acronym>
        <description>A disorder due to mitochondrial dysfunction. It is characterized by infantile onset of hypotonia, neurologic deterioration, a hyperkinetic-dystonic movement disorder, external ophthalmoplegia, deafness, variable renal tubular dysfunction, and mild methylmalonic aciduria in some patients.</description>
        <dbReference type="MIM" id="612073"/>
    </disease>
    <text>The disease is caused by variants affecting the gene represented in this entry.</text>
</comment>
<comment type="similarity">
    <text evidence="2">Belongs to the succinate/malate CoA ligase beta subunit family. ATP-specific subunit beta subfamily.</text>
</comment>
<reference key="1">
    <citation type="journal article" date="2000" name="J. Clin. Invest.">
        <title>Interaction between succinyl CoA synthetase and the heme-biosynthetic enzyme ALAS-E is disrupted in sideroblastic anemia.</title>
        <authorList>
            <person name="Furuyama K."/>
            <person name="Shigeru S."/>
        </authorList>
    </citation>
    <scope>NUCLEOTIDE SEQUENCE [MRNA] (ISOFORM 1)</scope>
</reference>
<reference key="2">
    <citation type="journal article" date="2004" name="Nat. Genet.">
        <title>Complete sequencing and characterization of 21,243 full-length human cDNAs.</title>
        <authorList>
            <person name="Ota T."/>
            <person name="Suzuki Y."/>
            <person name="Nishikawa T."/>
            <person name="Otsuki T."/>
            <person name="Sugiyama T."/>
            <person name="Irie R."/>
            <person name="Wakamatsu A."/>
            <person name="Hayashi K."/>
            <person name="Sato H."/>
            <person name="Nagai K."/>
            <person name="Kimura K."/>
            <person name="Makita H."/>
            <person name="Sekine M."/>
            <person name="Obayashi M."/>
            <person name="Nishi T."/>
            <person name="Shibahara T."/>
            <person name="Tanaka T."/>
            <person name="Ishii S."/>
            <person name="Yamamoto J."/>
            <person name="Saito K."/>
            <person name="Kawai Y."/>
            <person name="Isono Y."/>
            <person name="Nakamura Y."/>
            <person name="Nagahari K."/>
            <person name="Murakami K."/>
            <person name="Yasuda T."/>
            <person name="Iwayanagi T."/>
            <person name="Wagatsuma M."/>
            <person name="Shiratori A."/>
            <person name="Sudo H."/>
            <person name="Hosoiri T."/>
            <person name="Kaku Y."/>
            <person name="Kodaira H."/>
            <person name="Kondo H."/>
            <person name="Sugawara M."/>
            <person name="Takahashi M."/>
            <person name="Kanda K."/>
            <person name="Yokoi T."/>
            <person name="Furuya T."/>
            <person name="Kikkawa E."/>
            <person name="Omura Y."/>
            <person name="Abe K."/>
            <person name="Kamihara K."/>
            <person name="Katsuta N."/>
            <person name="Sato K."/>
            <person name="Tanikawa M."/>
            <person name="Yamazaki M."/>
            <person name="Ninomiya K."/>
            <person name="Ishibashi T."/>
            <person name="Yamashita H."/>
            <person name="Murakawa K."/>
            <person name="Fujimori K."/>
            <person name="Tanai H."/>
            <person name="Kimata M."/>
            <person name="Watanabe M."/>
            <person name="Hiraoka S."/>
            <person name="Chiba Y."/>
            <person name="Ishida S."/>
            <person name="Ono Y."/>
            <person name="Takiguchi S."/>
            <person name="Watanabe S."/>
            <person name="Yosida M."/>
            <person name="Hotuta T."/>
            <person name="Kusano J."/>
            <person name="Kanehori K."/>
            <person name="Takahashi-Fujii A."/>
            <person name="Hara H."/>
            <person name="Tanase T.-O."/>
            <person name="Nomura Y."/>
            <person name="Togiya S."/>
            <person name="Komai F."/>
            <person name="Hara R."/>
            <person name="Takeuchi K."/>
            <person name="Arita M."/>
            <person name="Imose N."/>
            <person name="Musashino K."/>
            <person name="Yuuki H."/>
            <person name="Oshima A."/>
            <person name="Sasaki N."/>
            <person name="Aotsuka S."/>
            <person name="Yoshikawa Y."/>
            <person name="Matsunawa H."/>
            <person name="Ichihara T."/>
            <person name="Shiohata N."/>
            <person name="Sano S."/>
            <person name="Moriya S."/>
            <person name="Momiyama H."/>
            <person name="Satoh N."/>
            <person name="Takami S."/>
            <person name="Terashima Y."/>
            <person name="Suzuki O."/>
            <person name="Nakagawa S."/>
            <person name="Senoh A."/>
            <person name="Mizoguchi H."/>
            <person name="Goto Y."/>
            <person name="Shimizu F."/>
            <person name="Wakebe H."/>
            <person name="Hishigaki H."/>
            <person name="Watanabe T."/>
            <person name="Sugiyama A."/>
            <person name="Takemoto M."/>
            <person name="Kawakami B."/>
            <person name="Yamazaki M."/>
            <person name="Watanabe K."/>
            <person name="Kumagai A."/>
            <person name="Itakura S."/>
            <person name="Fukuzumi Y."/>
            <person name="Fujimori Y."/>
            <person name="Komiyama M."/>
            <person name="Tashiro H."/>
            <person name="Tanigami A."/>
            <person name="Fujiwara T."/>
            <person name="Ono T."/>
            <person name="Yamada K."/>
            <person name="Fujii Y."/>
            <person name="Ozaki K."/>
            <person name="Hirao M."/>
            <person name="Ohmori Y."/>
            <person name="Kawabata A."/>
            <person name="Hikiji T."/>
            <person name="Kobatake N."/>
            <person name="Inagaki H."/>
            <person name="Ikema Y."/>
            <person name="Okamoto S."/>
            <person name="Okitani R."/>
            <person name="Kawakami T."/>
            <person name="Noguchi S."/>
            <person name="Itoh T."/>
            <person name="Shigeta K."/>
            <person name="Senba T."/>
            <person name="Matsumura K."/>
            <person name="Nakajima Y."/>
            <person name="Mizuno T."/>
            <person name="Morinaga M."/>
            <person name="Sasaki M."/>
            <person name="Togashi T."/>
            <person name="Oyama M."/>
            <person name="Hata H."/>
            <person name="Watanabe M."/>
            <person name="Komatsu T."/>
            <person name="Mizushima-Sugano J."/>
            <person name="Satoh T."/>
            <person name="Shirai Y."/>
            <person name="Takahashi Y."/>
            <person name="Nakagawa K."/>
            <person name="Okumura K."/>
            <person name="Nagase T."/>
            <person name="Nomura N."/>
            <person name="Kikuchi H."/>
            <person name="Masuho Y."/>
            <person name="Yamashita R."/>
            <person name="Nakai K."/>
            <person name="Yada T."/>
            <person name="Nakamura Y."/>
            <person name="Ohara O."/>
            <person name="Isogai T."/>
            <person name="Sugano S."/>
        </authorList>
    </citation>
    <scope>NUCLEOTIDE SEQUENCE [LARGE SCALE MRNA] (ISOFORMS 1 AND 2)</scope>
    <scope>VARIANT THR-199</scope>
    <source>
        <tissue>Placenta</tissue>
        <tissue>Tongue</tissue>
    </source>
</reference>
<reference key="3">
    <citation type="journal article" date="2004" name="Nature">
        <title>The DNA sequence and analysis of human chromosome 13.</title>
        <authorList>
            <person name="Dunham A."/>
            <person name="Matthews L.H."/>
            <person name="Burton J."/>
            <person name="Ashurst J.L."/>
            <person name="Howe K.L."/>
            <person name="Ashcroft K.J."/>
            <person name="Beare D.M."/>
            <person name="Burford D.C."/>
            <person name="Hunt S.E."/>
            <person name="Griffiths-Jones S."/>
            <person name="Jones M.C."/>
            <person name="Keenan S.J."/>
            <person name="Oliver K."/>
            <person name="Scott C.E."/>
            <person name="Ainscough R."/>
            <person name="Almeida J.P."/>
            <person name="Ambrose K.D."/>
            <person name="Andrews D.T."/>
            <person name="Ashwell R.I.S."/>
            <person name="Babbage A.K."/>
            <person name="Bagguley C.L."/>
            <person name="Bailey J."/>
            <person name="Bannerjee R."/>
            <person name="Barlow K.F."/>
            <person name="Bates K."/>
            <person name="Beasley H."/>
            <person name="Bird C.P."/>
            <person name="Bray-Allen S."/>
            <person name="Brown A.J."/>
            <person name="Brown J.Y."/>
            <person name="Burrill W."/>
            <person name="Carder C."/>
            <person name="Carter N.P."/>
            <person name="Chapman J.C."/>
            <person name="Clamp M.E."/>
            <person name="Clark S.Y."/>
            <person name="Clarke G."/>
            <person name="Clee C.M."/>
            <person name="Clegg S.C."/>
            <person name="Cobley V."/>
            <person name="Collins J.E."/>
            <person name="Corby N."/>
            <person name="Coville G.J."/>
            <person name="Deloukas P."/>
            <person name="Dhami P."/>
            <person name="Dunham I."/>
            <person name="Dunn M."/>
            <person name="Earthrowl M.E."/>
            <person name="Ellington A.G."/>
            <person name="Faulkner L."/>
            <person name="Frankish A.G."/>
            <person name="Frankland J."/>
            <person name="French L."/>
            <person name="Garner P."/>
            <person name="Garnett J."/>
            <person name="Gilbert J.G.R."/>
            <person name="Gilson C.J."/>
            <person name="Ghori J."/>
            <person name="Grafham D.V."/>
            <person name="Gribble S.M."/>
            <person name="Griffiths C."/>
            <person name="Hall R.E."/>
            <person name="Hammond S."/>
            <person name="Harley J.L."/>
            <person name="Hart E.A."/>
            <person name="Heath P.D."/>
            <person name="Howden P.J."/>
            <person name="Huckle E.J."/>
            <person name="Hunt P.J."/>
            <person name="Hunt A.R."/>
            <person name="Johnson C."/>
            <person name="Johnson D."/>
            <person name="Kay M."/>
            <person name="Kimberley A.M."/>
            <person name="King A."/>
            <person name="Laird G.K."/>
            <person name="Langford C.J."/>
            <person name="Lawlor S."/>
            <person name="Leongamornlert D.A."/>
            <person name="Lloyd D.M."/>
            <person name="Lloyd C."/>
            <person name="Loveland J.E."/>
            <person name="Lovell J."/>
            <person name="Martin S."/>
            <person name="Mashreghi-Mohammadi M."/>
            <person name="McLaren S.J."/>
            <person name="McMurray A."/>
            <person name="Milne S."/>
            <person name="Moore M.J.F."/>
            <person name="Nickerson T."/>
            <person name="Palmer S.A."/>
            <person name="Pearce A.V."/>
            <person name="Peck A.I."/>
            <person name="Pelan S."/>
            <person name="Phillimore B."/>
            <person name="Porter K.M."/>
            <person name="Rice C.M."/>
            <person name="Searle S."/>
            <person name="Sehra H.K."/>
            <person name="Shownkeen R."/>
            <person name="Skuce C.D."/>
            <person name="Smith M."/>
            <person name="Steward C.A."/>
            <person name="Sycamore N."/>
            <person name="Tester J."/>
            <person name="Thomas D.W."/>
            <person name="Tracey A."/>
            <person name="Tromans A."/>
            <person name="Tubby B."/>
            <person name="Wall M."/>
            <person name="Wallis J.M."/>
            <person name="West A.P."/>
            <person name="Whitehead S.L."/>
            <person name="Willey D.L."/>
            <person name="Wilming L."/>
            <person name="Wray P.W."/>
            <person name="Wright M.W."/>
            <person name="Young L."/>
            <person name="Coulson A."/>
            <person name="Durbin R.M."/>
            <person name="Hubbard T."/>
            <person name="Sulston J.E."/>
            <person name="Beck S."/>
            <person name="Bentley D.R."/>
            <person name="Rogers J."/>
            <person name="Ross M.T."/>
        </authorList>
    </citation>
    <scope>NUCLEOTIDE SEQUENCE [LARGE SCALE GENOMIC DNA]</scope>
</reference>
<reference key="4">
    <citation type="submission" date="2005-07" db="EMBL/GenBank/DDBJ databases">
        <authorList>
            <person name="Mural R.J."/>
            <person name="Istrail S."/>
            <person name="Sutton G.G."/>
            <person name="Florea L."/>
            <person name="Halpern A.L."/>
            <person name="Mobarry C.M."/>
            <person name="Lippert R."/>
            <person name="Walenz B."/>
            <person name="Shatkay H."/>
            <person name="Dew I."/>
            <person name="Miller J.R."/>
            <person name="Flanigan M.J."/>
            <person name="Edwards N.J."/>
            <person name="Bolanos R."/>
            <person name="Fasulo D."/>
            <person name="Halldorsson B.V."/>
            <person name="Hannenhalli S."/>
            <person name="Turner R."/>
            <person name="Yooseph S."/>
            <person name="Lu F."/>
            <person name="Nusskern D.R."/>
            <person name="Shue B.C."/>
            <person name="Zheng X.H."/>
            <person name="Zhong F."/>
            <person name="Delcher A.L."/>
            <person name="Huson D.H."/>
            <person name="Kravitz S.A."/>
            <person name="Mouchard L."/>
            <person name="Reinert K."/>
            <person name="Remington K.A."/>
            <person name="Clark A.G."/>
            <person name="Waterman M.S."/>
            <person name="Eichler E.E."/>
            <person name="Adams M.D."/>
            <person name="Hunkapiller M.W."/>
            <person name="Myers E.W."/>
            <person name="Venter J.C."/>
        </authorList>
    </citation>
    <scope>NUCLEOTIDE SEQUENCE [LARGE SCALE GENOMIC DNA]</scope>
    <scope>VARIANT THR-199</scope>
</reference>
<reference key="5">
    <citation type="journal article" date="2004" name="Genome Res.">
        <title>The status, quality, and expansion of the NIH full-length cDNA project: the Mammalian Gene Collection (MGC).</title>
        <authorList>
            <consortium name="The MGC Project Team"/>
        </authorList>
    </citation>
    <scope>NUCLEOTIDE SEQUENCE [LARGE SCALE MRNA] (ISOFORM 1)</scope>
    <source>
        <tissue>Testis</tissue>
    </source>
</reference>
<reference key="6">
    <citation type="journal article" date="1998" name="J. Biol. Chem.">
        <title>Genetic evidence for the expression of ATP- and GTP-specific succinyl-CoA synthetases in multicellular eucaryotes.</title>
        <authorList>
            <person name="Johnson J.D."/>
            <person name="Mehus J.G."/>
            <person name="Tews K."/>
            <person name="Milavetz B.I."/>
            <person name="Lambeth D.O."/>
        </authorList>
    </citation>
    <scope>NUCLEOTIDE SEQUENCE [MRNA] OF 38-463 (ISOFORM 1)</scope>
    <scope>TISSUE SPECIFICITY</scope>
    <scope>VARIANT THR-199</scope>
    <source>
        <tissue>Liver</tissue>
    </source>
</reference>
<reference key="7">
    <citation type="journal article" date="1999" name="Int. J. Cancer">
        <title>Antigens recognized by autologous antibody in patients with renal-cell carcinoma.</title>
        <authorList>
            <person name="Scanlan M.J."/>
            <person name="Gordan J.D."/>
            <person name="Williamson B."/>
            <person name="Stockert E."/>
            <person name="Bander N.H."/>
            <person name="Jongeneel C.V."/>
            <person name="Gure A.O."/>
            <person name="Jaeger D."/>
            <person name="Jaeger E."/>
            <person name="Knuth A."/>
            <person name="Chen Y.-T."/>
            <person name="Old L.J."/>
        </authorList>
    </citation>
    <scope>IDENTIFICATION AS A RENAL CANCER ANTIGEN</scope>
    <source>
        <tissue>Renal cell carcinoma</tissue>
    </source>
</reference>
<reference key="8">
    <citation type="journal article" date="2004" name="Int. J. Biochem. Cell Biol.">
        <title>The major splice variant of human 5-aminolevulinate synthase-2 contributes significantly to erythroid heme biosynthesis.</title>
        <authorList>
            <person name="Cox T.C."/>
            <person name="Sadlon T.J."/>
            <person name="Schwarz Q.P."/>
            <person name="Matthews C.S."/>
            <person name="Wise P.D."/>
            <person name="Cox L.L."/>
            <person name="Bottomley S.S."/>
            <person name="May B.K."/>
        </authorList>
    </citation>
    <scope>INTERACTION WITH ALAS2</scope>
</reference>
<reference key="9">
    <citation type="journal article" date="2005" name="Am. J. Hum. Genet.">
        <title>Deficiency of the ADP-forming succinyl-CoA synthase activity is associated with encephalomyopathy and mitochondrial DNA depletion.</title>
        <authorList>
            <person name="Elpeleg O."/>
            <person name="Miller C."/>
            <person name="Hershkovitz E."/>
            <person name="Bitner-Glindzicz M."/>
            <person name="Bondi-Rubinstein G."/>
            <person name="Rahman S."/>
            <person name="Pagnamenta A."/>
            <person name="Eshhar S."/>
            <person name="Saada A."/>
        </authorList>
    </citation>
    <scope>INVOLVEMENT IN MTDPS5</scope>
    <scope>CATALYTIC ACTIVITY</scope>
    <scope>FUNCTION</scope>
    <scope>SUBCELLULAR LOCATION</scope>
</reference>
<reference key="10">
    <citation type="journal article" date="2005" name="Nat. Biotechnol.">
        <title>Immunoaffinity profiling of tyrosine phosphorylation in cancer cells.</title>
        <authorList>
            <person name="Rush J."/>
            <person name="Moritz A."/>
            <person name="Lee K.A."/>
            <person name="Guo A."/>
            <person name="Goss V.L."/>
            <person name="Spek E.J."/>
            <person name="Zhang H."/>
            <person name="Zha X.-M."/>
            <person name="Polakiewicz R.D."/>
            <person name="Comb M.J."/>
        </authorList>
    </citation>
    <scope>PHOSPHORYLATION [LARGE SCALE ANALYSIS] AT TYR-84</scope>
    <scope>IDENTIFICATION BY MASS SPECTROMETRY [LARGE SCALE ANALYSIS]</scope>
</reference>
<reference key="11">
    <citation type="journal article" date="2007" name="Brain">
        <title>Mitochondrial encephalomyopathy with elevated methylmalonic acid is caused by SUCLA2 mutations.</title>
        <authorList>
            <person name="Ostergaard E."/>
            <person name="Hansen F.J."/>
            <person name="Sorensen N."/>
            <person name="Duno M."/>
            <person name="Vissing J."/>
            <person name="Larsen P.L."/>
            <person name="Faeroe O."/>
            <person name="Thorgrimsson S."/>
            <person name="Wibrand F."/>
            <person name="Christensen E."/>
            <person name="Schwartz M."/>
        </authorList>
    </citation>
    <scope>INVOLVEMENT IN MTDPS5</scope>
    <scope>SUBCELLULAR LOCATION</scope>
</reference>
<reference key="12">
    <citation type="journal article" date="2009" name="Science">
        <title>Lysine acetylation targets protein complexes and co-regulates major cellular functions.</title>
        <authorList>
            <person name="Choudhary C."/>
            <person name="Kumar C."/>
            <person name="Gnad F."/>
            <person name="Nielsen M.L."/>
            <person name="Rehman M."/>
            <person name="Walther T.C."/>
            <person name="Olsen J.V."/>
            <person name="Mann M."/>
        </authorList>
    </citation>
    <scope>ACETYLATION [LARGE SCALE ANALYSIS] AT LYS-78 AND LYS-143</scope>
    <scope>IDENTIFICATION BY MASS SPECTROMETRY [LARGE SCALE ANALYSIS]</scope>
</reference>
<reference key="13">
    <citation type="journal article" date="2011" name="BMC Syst. Biol.">
        <title>Initial characterization of the human central proteome.</title>
        <authorList>
            <person name="Burkard T.R."/>
            <person name="Planyavsky M."/>
            <person name="Kaupe I."/>
            <person name="Breitwieser F.P."/>
            <person name="Buerckstuemmer T."/>
            <person name="Bennett K.L."/>
            <person name="Superti-Furga G."/>
            <person name="Colinge J."/>
        </authorList>
    </citation>
    <scope>IDENTIFICATION BY MASS SPECTROMETRY [LARGE SCALE ANALYSIS]</scope>
</reference>
<reference key="14">
    <citation type="journal article" date="2014" name="J. Proteomics">
        <title>An enzyme assisted RP-RPLC approach for in-depth analysis of human liver phosphoproteome.</title>
        <authorList>
            <person name="Bian Y."/>
            <person name="Song C."/>
            <person name="Cheng K."/>
            <person name="Dong M."/>
            <person name="Wang F."/>
            <person name="Huang J."/>
            <person name="Sun D."/>
            <person name="Wang L."/>
            <person name="Ye M."/>
            <person name="Zou H."/>
        </authorList>
    </citation>
    <scope>IDENTIFICATION BY MASS SPECTROMETRY [LARGE SCALE ANALYSIS]</scope>
    <source>
        <tissue>Liver</tissue>
    </source>
</reference>
<reference key="15">
    <citation type="journal article" date="2015" name="Proteomics">
        <title>N-terminome analysis of the human mitochondrial proteome.</title>
        <authorList>
            <person name="Vaca Jacome A.S."/>
            <person name="Rabilloud T."/>
            <person name="Schaeffer-Reiss C."/>
            <person name="Rompais M."/>
            <person name="Ayoub D."/>
            <person name="Lane L."/>
            <person name="Bairoch A."/>
            <person name="Van Dorsselaer A."/>
            <person name="Carapito C."/>
        </authorList>
    </citation>
    <scope>SUBCELLULAR LOCATION</scope>
    <scope>CLEAVAGE OF TRANSIT PEPTIDE [LARGE SCALE ANALYSIS] AFTER ASN-52</scope>
    <scope>IDENTIFICATION BY MASS SPECTROMETRY [LARGE SCALE ANALYSIS]</scope>
</reference>
<reference key="16">
    <citation type="journal article" date="2021" name="Blood Adv.">
        <title>The immunometabolite itaconate inhibits heme synthesis and remodels cellular metabolism in erythroid precursors.</title>
        <authorList>
            <person name="Marcero J.R."/>
            <person name="Cox J.E."/>
            <person name="Bergonia H.A."/>
            <person name="Medlock A.E."/>
            <person name="Phillips J.D."/>
            <person name="Dailey H.A."/>
        </authorList>
    </citation>
    <scope>FUNCTION</scope>
    <scope>CATALYTIC ACTIVITY</scope>
    <scope>ACTIVITY REGULATION</scope>
</reference>
<reference key="17">
    <citation type="journal article" date="2007" name="Brain">
        <title>SUCLA2 mutations are associated with mild methylmalonic aciduria, Leigh-like encephalomyopathy, dystonia and deafness.</title>
        <authorList>
            <person name="Carrozzo R."/>
            <person name="Dionisi-Vici C."/>
            <person name="Steuerwald U."/>
            <person name="Lucioli S."/>
            <person name="Deodato F."/>
            <person name="Di Giandomenico S."/>
            <person name="Bertini E."/>
            <person name="Franke B."/>
            <person name="Kluijtmans L.A."/>
            <person name="Meschini M.C."/>
            <person name="Rizzo C."/>
            <person name="Piemonte F."/>
            <person name="Rodenburg R."/>
            <person name="Santer R."/>
            <person name="Santorelli F.M."/>
            <person name="van Rooij A."/>
            <person name="Vermunt-de Koning D."/>
            <person name="Morava E."/>
            <person name="Wevers R.A."/>
        </authorList>
    </citation>
    <scope>VARIANTS MTDPS5 ARG-118 AND CYS-284</scope>
</reference>
<reference key="18">
    <citation type="journal article" date="2013" name="J. Hum. Genet.">
        <title>The novel mutation p.Asp251Asn in the beta-subunit of succinate-CoA ligase causes encephalomyopathy and elevated succinylcarnitine.</title>
        <authorList>
            <person name="Jaberi E."/>
            <person name="Chitsazian F."/>
            <person name="Ali Shahidi G."/>
            <person name="Rohani M."/>
            <person name="Sina F."/>
            <person name="Safari I."/>
            <person name="Malakouti Nejad M."/>
            <person name="Houshmand M."/>
            <person name="Klotzle B."/>
            <person name="Elahi E."/>
        </authorList>
    </citation>
    <scope>VARIANT MTDPS5 ASN-251</scope>
</reference>
<feature type="transit peptide" description="Mitochondrion" evidence="19">
    <location>
        <begin position="1"/>
        <end position="52"/>
    </location>
</feature>
<feature type="chain" id="PRO_0000033352" description="Succinate--CoA ligase [ADP-forming] subunit beta, mitochondrial" evidence="2">
    <location>
        <begin position="53"/>
        <end position="463"/>
    </location>
</feature>
<feature type="domain" description="ATP-grasp" evidence="2">
    <location>
        <begin position="61"/>
        <end position="288"/>
    </location>
</feature>
<feature type="binding site" evidence="2">
    <location>
        <position position="98"/>
    </location>
    <ligand>
        <name>ATP</name>
        <dbReference type="ChEBI" id="CHEBI:30616"/>
    </ligand>
</feature>
<feature type="binding site" evidence="2">
    <location>
        <begin position="105"/>
        <end position="107"/>
    </location>
    <ligand>
        <name>ATP</name>
        <dbReference type="ChEBI" id="CHEBI:30616"/>
    </ligand>
</feature>
<feature type="binding site" evidence="2">
    <location>
        <position position="258"/>
    </location>
    <ligand>
        <name>Mg(2+)</name>
        <dbReference type="ChEBI" id="CHEBI:18420"/>
    </ligand>
</feature>
<feature type="binding site" evidence="2">
    <location>
        <position position="272"/>
    </location>
    <ligand>
        <name>Mg(2+)</name>
        <dbReference type="ChEBI" id="CHEBI:18420"/>
    </ligand>
</feature>
<feature type="binding site" evidence="2">
    <location>
        <position position="323"/>
    </location>
    <ligand>
        <name>substrate</name>
        <note>ligand shared with subunit alpha</note>
    </ligand>
</feature>
<feature type="binding site" evidence="2">
    <location>
        <begin position="380"/>
        <end position="382"/>
    </location>
    <ligand>
        <name>substrate</name>
        <note>ligand shared with subunit alpha</note>
    </ligand>
</feature>
<feature type="site" description="Important for substrate specificity" evidence="2">
    <location>
        <position position="94"/>
    </location>
</feature>
<feature type="site" description="Important for substrate specificity" evidence="2">
    <location>
        <position position="162"/>
    </location>
</feature>
<feature type="modified residue" description="N6-acetyllysine" evidence="18">
    <location>
        <position position="78"/>
    </location>
</feature>
<feature type="modified residue" description="Phosphotyrosine" evidence="17">
    <location>
        <position position="84"/>
    </location>
</feature>
<feature type="modified residue" description="N6-acetyllysine; alternate" evidence="1">
    <location>
        <position position="88"/>
    </location>
</feature>
<feature type="modified residue" description="N6-succinyllysine; alternate" evidence="1">
    <location>
        <position position="88"/>
    </location>
</feature>
<feature type="modified residue" description="N6-acetyllysine" evidence="1">
    <location>
        <position position="129"/>
    </location>
</feature>
<feature type="modified residue" description="N6-acetyllysine" evidence="1">
    <location>
        <position position="139"/>
    </location>
</feature>
<feature type="modified residue" description="N6-acetyllysine" evidence="18">
    <location>
        <position position="143"/>
    </location>
</feature>
<feature type="modified residue" description="N6-acetyllysine" evidence="1">
    <location>
        <position position="216"/>
    </location>
</feature>
<feature type="modified residue" description="Phosphoserine" evidence="1">
    <location>
        <position position="279"/>
    </location>
</feature>
<feature type="modified residue" description="Phosphothreonine" evidence="1">
    <location>
        <position position="341"/>
    </location>
</feature>
<feature type="modified residue" description="N6-acetyllysine" evidence="1">
    <location>
        <position position="368"/>
    </location>
</feature>
<feature type="splice variant" id="VSP_006292" description="In isoform 2." evidence="13">
    <location>
        <begin position="26"/>
        <end position="47"/>
    </location>
</feature>
<feature type="sequence variant" id="VAR_046214" description="In dbSNP:rs35201084.">
    <original>V</original>
    <variation>M</variation>
    <location>
        <position position="13"/>
    </location>
</feature>
<feature type="sequence variant" id="VAR_046215" description="In MTDPS5; dbSNP:rs121908537." evidence="7">
    <original>G</original>
    <variation>R</variation>
    <location>
        <position position="118"/>
    </location>
</feature>
<feature type="sequence variant" id="VAR_013459" description="In dbSNP:rs7320366." evidence="4 11 12">
    <original>S</original>
    <variation>T</variation>
    <location>
        <position position="199"/>
    </location>
</feature>
<feature type="sequence variant" id="VAR_070123" description="In MTDPS5; dbSNP:rs397515462." evidence="8">
    <original>D</original>
    <variation>N</variation>
    <location>
        <position position="251"/>
    </location>
</feature>
<feature type="sequence variant" id="VAR_046216" description="In MTDPS5; dbSNP:rs121908538." evidence="7">
    <original>R</original>
    <variation>C</variation>
    <location>
        <position position="284"/>
    </location>
</feature>
<feature type="sequence conflict" description="In Ref. 2; BAA91939." evidence="15" ref="2">
    <original>N</original>
    <variation>D</variation>
    <location>
        <position position="40"/>
    </location>
</feature>
<feature type="sequence conflict" description="In Ref. 2; BAA91939." evidence="15" ref="2">
    <original>I</original>
    <variation>V</variation>
    <location>
        <position position="203"/>
    </location>
</feature>
<feature type="sequence conflict" description="In Ref. 2; BAA91703." evidence="15" ref="2">
    <original>N</original>
    <variation>S</variation>
    <location>
        <position position="323"/>
    </location>
</feature>
<feature type="helix" evidence="20">
    <location>
        <begin position="57"/>
        <end position="66"/>
    </location>
</feature>
<feature type="strand" evidence="20">
    <location>
        <begin position="74"/>
        <end position="79"/>
    </location>
</feature>
<feature type="helix" evidence="20">
    <location>
        <begin position="80"/>
        <end position="89"/>
    </location>
</feature>
<feature type="strand" evidence="20">
    <location>
        <begin position="92"/>
        <end position="99"/>
    </location>
</feature>
<feature type="strand" evidence="20">
    <location>
        <begin position="109"/>
        <end position="111"/>
    </location>
</feature>
<feature type="strand" evidence="20">
    <location>
        <begin position="118"/>
        <end position="124"/>
    </location>
</feature>
<feature type="helix" evidence="20">
    <location>
        <begin position="125"/>
        <end position="133"/>
    </location>
</feature>
<feature type="turn" evidence="20">
    <location>
        <begin position="134"/>
        <end position="137"/>
    </location>
</feature>
<feature type="strand" evidence="20">
    <location>
        <begin position="138"/>
        <end position="141"/>
    </location>
</feature>
<feature type="turn" evidence="20">
    <location>
        <begin position="143"/>
        <end position="147"/>
    </location>
</feature>
<feature type="strand" evidence="20">
    <location>
        <begin position="150"/>
        <end position="152"/>
    </location>
</feature>
<feature type="strand" evidence="20">
    <location>
        <begin position="155"/>
        <end position="159"/>
    </location>
</feature>
<feature type="strand" evidence="20">
    <location>
        <begin position="164"/>
        <end position="174"/>
    </location>
</feature>
<feature type="turn" evidence="20">
    <location>
        <begin position="175"/>
        <end position="178"/>
    </location>
</feature>
<feature type="strand" evidence="20">
    <location>
        <begin position="179"/>
        <end position="186"/>
    </location>
</feature>
<feature type="helix" evidence="20">
    <location>
        <begin position="192"/>
        <end position="198"/>
    </location>
</feature>
<feature type="helix" evidence="20">
    <location>
        <begin position="200"/>
        <end position="202"/>
    </location>
</feature>
<feature type="strand" evidence="20">
    <location>
        <begin position="203"/>
        <end position="207"/>
    </location>
</feature>
<feature type="turn" evidence="20">
    <location>
        <begin position="210"/>
        <end position="212"/>
    </location>
</feature>
<feature type="helix" evidence="20">
    <location>
        <begin position="216"/>
        <end position="225"/>
    </location>
</feature>
<feature type="helix" evidence="20">
    <location>
        <begin position="230"/>
        <end position="232"/>
    </location>
</feature>
<feature type="helix" evidence="20">
    <location>
        <begin position="233"/>
        <end position="249"/>
    </location>
</feature>
<feature type="strand" evidence="20">
    <location>
        <begin position="252"/>
        <end position="262"/>
    </location>
</feature>
<feature type="strand" evidence="20">
    <location>
        <begin position="268"/>
        <end position="270"/>
    </location>
</feature>
<feature type="strand" evidence="20">
    <location>
        <begin position="274"/>
        <end position="277"/>
    </location>
</feature>
<feature type="helix" evidence="20">
    <location>
        <begin position="279"/>
        <end position="284"/>
    </location>
</feature>
<feature type="helix" evidence="20">
    <location>
        <begin position="288"/>
        <end position="290"/>
    </location>
</feature>
<feature type="helix" evidence="20">
    <location>
        <begin position="304"/>
        <end position="307"/>
    </location>
</feature>
<feature type="strand" evidence="20">
    <location>
        <begin position="310"/>
        <end position="313"/>
    </location>
</feature>
<feature type="strand" evidence="20">
    <location>
        <begin position="317"/>
        <end position="324"/>
    </location>
</feature>
<feature type="helix" evidence="20">
    <location>
        <begin position="325"/>
        <end position="337"/>
    </location>
</feature>
<feature type="strand" evidence="20">
    <location>
        <begin position="344"/>
        <end position="347"/>
    </location>
</feature>
<feature type="helix" evidence="20">
    <location>
        <begin position="354"/>
        <end position="365"/>
    </location>
</feature>
<feature type="strand" evidence="20">
    <location>
        <begin position="372"/>
        <end position="378"/>
    </location>
</feature>
<feature type="helix" evidence="20">
    <location>
        <begin position="385"/>
        <end position="397"/>
    </location>
</feature>
<feature type="strand" evidence="20">
    <location>
        <begin position="404"/>
        <end position="411"/>
    </location>
</feature>
<feature type="helix" evidence="20">
    <location>
        <begin position="413"/>
        <end position="421"/>
    </location>
</feature>
<feature type="strand" evidence="20">
    <location>
        <begin position="422"/>
        <end position="425"/>
    </location>
</feature>
<feature type="strand" evidence="20">
    <location>
        <begin position="427"/>
        <end position="432"/>
    </location>
</feature>
<feature type="helix" evidence="20">
    <location>
        <begin position="433"/>
        <end position="452"/>
    </location>
</feature>